<dbReference type="EMBL" id="CP000247">
    <property type="protein sequence ID" value="ABG71304.1"/>
    <property type="molecule type" value="Genomic_DNA"/>
</dbReference>
<dbReference type="RefSeq" id="WP_000510971.1">
    <property type="nucleotide sequence ID" value="NC_008253.1"/>
</dbReference>
<dbReference type="SMR" id="Q0TCM5"/>
<dbReference type="KEGG" id="ecp:ECP_3324"/>
<dbReference type="HOGENOM" id="CLU_027647_0_0_6"/>
<dbReference type="Proteomes" id="UP000009182">
    <property type="component" value="Chromosome"/>
</dbReference>
<dbReference type="GO" id="GO:0005886">
    <property type="term" value="C:plasma membrane"/>
    <property type="evidence" value="ECO:0007669"/>
    <property type="project" value="UniProtKB-SubCell"/>
</dbReference>
<dbReference type="GO" id="GO:0022857">
    <property type="term" value="F:transmembrane transporter activity"/>
    <property type="evidence" value="ECO:0007669"/>
    <property type="project" value="UniProtKB-UniRule"/>
</dbReference>
<dbReference type="GO" id="GO:0046942">
    <property type="term" value="P:carboxylic acid transport"/>
    <property type="evidence" value="ECO:0007669"/>
    <property type="project" value="InterPro"/>
</dbReference>
<dbReference type="HAMAP" id="MF_01545">
    <property type="entry name" value="AaeB"/>
    <property type="match status" value="1"/>
</dbReference>
<dbReference type="InterPro" id="IPR006726">
    <property type="entry name" value="PHBA_efflux_AaeB/fusaric-R"/>
</dbReference>
<dbReference type="InterPro" id="IPR023706">
    <property type="entry name" value="PHBA_efflux_pump_AaeB"/>
</dbReference>
<dbReference type="NCBIfam" id="NF007916">
    <property type="entry name" value="PRK10631.1"/>
    <property type="match status" value="1"/>
</dbReference>
<dbReference type="PANTHER" id="PTHR30509:SF9">
    <property type="entry name" value="MULTIDRUG RESISTANCE PROTEIN MDTO"/>
    <property type="match status" value="1"/>
</dbReference>
<dbReference type="PANTHER" id="PTHR30509">
    <property type="entry name" value="P-HYDROXYBENZOIC ACID EFFLUX PUMP SUBUNIT-RELATED"/>
    <property type="match status" value="1"/>
</dbReference>
<dbReference type="Pfam" id="PF04632">
    <property type="entry name" value="FUSC"/>
    <property type="match status" value="1"/>
</dbReference>
<organism>
    <name type="scientific">Escherichia coli O6:K15:H31 (strain 536 / UPEC)</name>
    <dbReference type="NCBI Taxonomy" id="362663"/>
    <lineage>
        <taxon>Bacteria</taxon>
        <taxon>Pseudomonadati</taxon>
        <taxon>Pseudomonadota</taxon>
        <taxon>Gammaproteobacteria</taxon>
        <taxon>Enterobacterales</taxon>
        <taxon>Enterobacteriaceae</taxon>
        <taxon>Escherichia</taxon>
    </lineage>
</organism>
<reference key="1">
    <citation type="journal article" date="2006" name="Mol. Microbiol.">
        <title>Role of pathogenicity island-associated integrases in the genome plasticity of uropathogenic Escherichia coli strain 536.</title>
        <authorList>
            <person name="Hochhut B."/>
            <person name="Wilde C."/>
            <person name="Balling G."/>
            <person name="Middendorf B."/>
            <person name="Dobrindt U."/>
            <person name="Brzuszkiewicz E."/>
            <person name="Gottschalk G."/>
            <person name="Carniel E."/>
            <person name="Hacker J."/>
        </authorList>
    </citation>
    <scope>NUCLEOTIDE SEQUENCE [LARGE SCALE GENOMIC DNA]</scope>
    <source>
        <strain>536 / UPEC</strain>
    </source>
</reference>
<comment type="function">
    <text evidence="1">Forms an efflux pump with AaeA. Could function as a metabolic relief valve, allowing to eliminate certain compounds when they accumulate to high levels in the cell.</text>
</comment>
<comment type="subcellular location">
    <subcellularLocation>
        <location evidence="1">Cell inner membrane</location>
        <topology evidence="1">Multi-pass membrane protein</topology>
    </subcellularLocation>
</comment>
<comment type="induction">
    <text evidence="1">Positively coregulated with aaeA and aaeX by AaeR.</text>
</comment>
<comment type="similarity">
    <text evidence="1">Belongs to the aromatic acid exporter ArAE (TC 2.A.85) family.</text>
</comment>
<gene>
    <name evidence="1" type="primary">aaeB</name>
    <name type="ordered locus">ECP_3324</name>
</gene>
<protein>
    <recommendedName>
        <fullName evidence="1">p-hydroxybenzoic acid efflux pump subunit AaeB</fullName>
        <shortName evidence="1">pHBA efflux pump protein B</shortName>
    </recommendedName>
</protein>
<keyword id="KW-0997">Cell inner membrane</keyword>
<keyword id="KW-1003">Cell membrane</keyword>
<keyword id="KW-0472">Membrane</keyword>
<keyword id="KW-0812">Transmembrane</keyword>
<keyword id="KW-1133">Transmembrane helix</keyword>
<keyword id="KW-0813">Transport</keyword>
<sequence length="655" mass="73640">MGIFSIANQHIRFAVKLATAIVLALFVGFHFQLETPRWAVLTAAIVAAGPAFAAGGEPYSGAIRYRGFLRIIGTFIGCIAGLVIIIAMIRAPLLMILVCCIWAGFCTWISSLVRIENSYAWGLAGYTALIIVITIQPEPLLTPQFAVERCSEIVIGIVCAIMADLLFSPRSIKQEVDRELESLLVAQYQLMQLCIKHGDGEVVDKAWGDLVRRTTALQGMRSNLNMESSRWARANRRLKAINTLSLTLITQSCETYLIQNTRPELITDTFREFFDTPVETAQDVHKQLKRLRRVIAWTGERETPVTIYSWVAAATRYQLLKRGVISNTKINATEEEILQGEPEVKVESAERHHAMVNFWRTTLSCILGTLFWLWTGWTSGSGAMVMIAVVTSLAMRLPNPRMVAIDFIYGTLAALPLGLLYFLVIIPNTQQSMLLLCISLAVLGFFLGIEVQKRRLGSMGALASTINIIVLDNPMTFHFSQFLDSALGQIVGCVLAFTVILLVRDKSRDRTGRVLLNQFVSAAVSAMTTNVARRKENHLPALYQQLFLLMNKFPGDLPKFRLALTMIIAHQRLRDAPIPVNEDLSAFHRQMRRTADHVISARSDDKRRRYFGQLLEELKIYQEKLRIWQAPPQVTEPVHRLTGMLHKYQHALTDS</sequence>
<proteinExistence type="inferred from homology"/>
<evidence type="ECO:0000255" key="1">
    <source>
        <dbReference type="HAMAP-Rule" id="MF_01545"/>
    </source>
</evidence>
<feature type="chain" id="PRO_0000300564" description="p-hydroxybenzoic acid efflux pump subunit AaeB">
    <location>
        <begin position="1"/>
        <end position="655"/>
    </location>
</feature>
<feature type="transmembrane region" description="Helical" evidence="1">
    <location>
        <begin position="13"/>
        <end position="33"/>
    </location>
</feature>
<feature type="transmembrane region" description="Helical" evidence="1">
    <location>
        <begin position="38"/>
        <end position="58"/>
    </location>
</feature>
<feature type="transmembrane region" description="Helical" evidence="1">
    <location>
        <begin position="69"/>
        <end position="89"/>
    </location>
</feature>
<feature type="transmembrane region" description="Helical" evidence="1">
    <location>
        <begin position="93"/>
        <end position="113"/>
    </location>
</feature>
<feature type="transmembrane region" description="Helical" evidence="1">
    <location>
        <begin position="121"/>
        <end position="141"/>
    </location>
</feature>
<feature type="transmembrane region" description="Helical" evidence="1">
    <location>
        <begin position="152"/>
        <end position="172"/>
    </location>
</feature>
<feature type="transmembrane region" description="Helical" evidence="1">
    <location>
        <begin position="370"/>
        <end position="390"/>
    </location>
</feature>
<feature type="transmembrane region" description="Helical" evidence="1">
    <location>
        <begin position="407"/>
        <end position="427"/>
    </location>
</feature>
<feature type="transmembrane region" description="Helical" evidence="1">
    <location>
        <begin position="431"/>
        <end position="451"/>
    </location>
</feature>
<feature type="transmembrane region" description="Helical" evidence="1">
    <location>
        <begin position="459"/>
        <end position="479"/>
    </location>
</feature>
<feature type="transmembrane region" description="Helical" evidence="1">
    <location>
        <begin position="482"/>
        <end position="502"/>
    </location>
</feature>
<name>AAEB_ECOL5</name>
<accession>Q0TCM5</accession>